<name>LEU1_PSEP7</name>
<accession>A6V0X2</accession>
<dbReference type="EC" id="2.3.3.13" evidence="1"/>
<dbReference type="EMBL" id="CP000744">
    <property type="protein sequence ID" value="ABR86416.1"/>
    <property type="molecule type" value="Genomic_DNA"/>
</dbReference>
<dbReference type="RefSeq" id="WP_012074569.1">
    <property type="nucleotide sequence ID" value="NC_009656.1"/>
</dbReference>
<dbReference type="SMR" id="A6V0X2"/>
<dbReference type="KEGG" id="pap:PSPA7_1323"/>
<dbReference type="HOGENOM" id="CLU_004588_3_0_6"/>
<dbReference type="UniPathway" id="UPA00048">
    <property type="reaction ID" value="UER00070"/>
</dbReference>
<dbReference type="Proteomes" id="UP000001582">
    <property type="component" value="Chromosome"/>
</dbReference>
<dbReference type="GO" id="GO:0005737">
    <property type="term" value="C:cytoplasm"/>
    <property type="evidence" value="ECO:0007669"/>
    <property type="project" value="UniProtKB-SubCell"/>
</dbReference>
<dbReference type="GO" id="GO:0003852">
    <property type="term" value="F:2-isopropylmalate synthase activity"/>
    <property type="evidence" value="ECO:0007669"/>
    <property type="project" value="UniProtKB-UniRule"/>
</dbReference>
<dbReference type="GO" id="GO:0003985">
    <property type="term" value="F:acetyl-CoA C-acetyltransferase activity"/>
    <property type="evidence" value="ECO:0007669"/>
    <property type="project" value="UniProtKB-UniRule"/>
</dbReference>
<dbReference type="GO" id="GO:0000287">
    <property type="term" value="F:magnesium ion binding"/>
    <property type="evidence" value="ECO:0007669"/>
    <property type="project" value="UniProtKB-UniRule"/>
</dbReference>
<dbReference type="GO" id="GO:0009098">
    <property type="term" value="P:L-leucine biosynthetic process"/>
    <property type="evidence" value="ECO:0007669"/>
    <property type="project" value="UniProtKB-UniRule"/>
</dbReference>
<dbReference type="CDD" id="cd07942">
    <property type="entry name" value="DRE_TIM_LeuA"/>
    <property type="match status" value="1"/>
</dbReference>
<dbReference type="FunFam" id="3.20.20.70:FF:000045">
    <property type="entry name" value="2-isopropylmalate synthase"/>
    <property type="match status" value="1"/>
</dbReference>
<dbReference type="FunFam" id="3.30.160.270:FF:000006">
    <property type="entry name" value="2-isopropylmalate synthase"/>
    <property type="match status" value="1"/>
</dbReference>
<dbReference type="Gene3D" id="3.30.160.270">
    <property type="match status" value="1"/>
</dbReference>
<dbReference type="Gene3D" id="3.20.20.70">
    <property type="entry name" value="Aldolase class I"/>
    <property type="match status" value="1"/>
</dbReference>
<dbReference type="HAMAP" id="MF_00572">
    <property type="entry name" value="LeuA_type2"/>
    <property type="match status" value="1"/>
</dbReference>
<dbReference type="InterPro" id="IPR013709">
    <property type="entry name" value="2-isopropylmalate_synth_dimer"/>
</dbReference>
<dbReference type="InterPro" id="IPR002034">
    <property type="entry name" value="AIPM/Hcit_synth_CS"/>
</dbReference>
<dbReference type="InterPro" id="IPR013785">
    <property type="entry name" value="Aldolase_TIM"/>
</dbReference>
<dbReference type="InterPro" id="IPR005668">
    <property type="entry name" value="IPM_Synthase"/>
</dbReference>
<dbReference type="InterPro" id="IPR054692">
    <property type="entry name" value="LeuA-like_post-cat"/>
</dbReference>
<dbReference type="InterPro" id="IPR036230">
    <property type="entry name" value="LeuA_allosteric_dom_sf"/>
</dbReference>
<dbReference type="InterPro" id="IPR039371">
    <property type="entry name" value="LeuA_N_DRE-TIM"/>
</dbReference>
<dbReference type="InterPro" id="IPR000891">
    <property type="entry name" value="PYR_CT"/>
</dbReference>
<dbReference type="NCBIfam" id="TIGR00970">
    <property type="entry name" value="leuA_yeast"/>
    <property type="match status" value="1"/>
</dbReference>
<dbReference type="NCBIfam" id="NF002991">
    <property type="entry name" value="PRK03739.1"/>
    <property type="match status" value="1"/>
</dbReference>
<dbReference type="PANTHER" id="PTHR46911">
    <property type="match status" value="1"/>
</dbReference>
<dbReference type="PANTHER" id="PTHR46911:SF1">
    <property type="entry name" value="2-ISOPROPYLMALATE SYNTHASE"/>
    <property type="match status" value="1"/>
</dbReference>
<dbReference type="Pfam" id="PF00682">
    <property type="entry name" value="HMGL-like"/>
    <property type="match status" value="1"/>
</dbReference>
<dbReference type="Pfam" id="PF22615">
    <property type="entry name" value="IPMS_D2"/>
    <property type="match status" value="1"/>
</dbReference>
<dbReference type="Pfam" id="PF08502">
    <property type="entry name" value="LeuA_dimer"/>
    <property type="match status" value="1"/>
</dbReference>
<dbReference type="SMART" id="SM00917">
    <property type="entry name" value="LeuA_dimer"/>
    <property type="match status" value="1"/>
</dbReference>
<dbReference type="SUPFAM" id="SSF110921">
    <property type="entry name" value="2-isopropylmalate synthase LeuA, allosteric (dimerisation) domain"/>
    <property type="match status" value="1"/>
</dbReference>
<dbReference type="SUPFAM" id="SSF51569">
    <property type="entry name" value="Aldolase"/>
    <property type="match status" value="1"/>
</dbReference>
<dbReference type="SUPFAM" id="SSF89000">
    <property type="entry name" value="post-HMGL domain-like"/>
    <property type="match status" value="1"/>
</dbReference>
<dbReference type="PROSITE" id="PS00815">
    <property type="entry name" value="AIPM_HOMOCIT_SYNTH_1"/>
    <property type="match status" value="1"/>
</dbReference>
<dbReference type="PROSITE" id="PS00816">
    <property type="entry name" value="AIPM_HOMOCIT_SYNTH_2"/>
    <property type="match status" value="1"/>
</dbReference>
<dbReference type="PROSITE" id="PS50991">
    <property type="entry name" value="PYR_CT"/>
    <property type="match status" value="1"/>
</dbReference>
<reference key="1">
    <citation type="submission" date="2007-06" db="EMBL/GenBank/DDBJ databases">
        <authorList>
            <person name="Dodson R.J."/>
            <person name="Harkins D."/>
            <person name="Paulsen I.T."/>
        </authorList>
    </citation>
    <scope>NUCLEOTIDE SEQUENCE [LARGE SCALE GENOMIC DNA]</scope>
    <source>
        <strain>DSM 24068 / PA7</strain>
    </source>
</reference>
<sequence length="556" mass="61829">MSMLKDPSQKYRPFPAINLPDRTWPSKTITEVPIWCSSDLRDGNQSLIEPMDAAKKMRFFKTLVQVGLKQIEVAFPSASDTDFNFVRELIEGNHIPDDVTIQVLTQAREDLITRTFESLRGAKKAIVHVYNATAPSFRRIVFNQDKQGVVDIATNAAKLIRKLAAEQPDTQWSFQYSPEIFSSTELEFSVEVCNAVIDVWQPTPEHKIILNLPATVECATPNVYADQIEWFGRHVNRRDSVIISLHTHNDRGTGVAATELGLMAGADRVEGCLFGNGERTGNVDLVTLALNMYTQGLHPQLDFSDIDAVRKVVEECNQLPVHPRHPYVGDLVHTAFSGSHQDAIRKGFAQQKEDAIWEVPYLPIDPADIGRDYEAVIRVNSQSGKGGITFLLEQEYGISLPRRMQIEFSQVVQGETDRLGLEMTAQQIYSLLENEYLKATSPYALASHRLQEENGTSAVDLEVTFDGEKQHWRGIGKGPLEALVAALPVKAEIMDYHEHAIGAGANARAAAYIEIRLEGQRPLHGIGIDENITTASFRALFSALNRAVTQAEAKAA</sequence>
<proteinExistence type="inferred from homology"/>
<gene>
    <name evidence="1" type="primary">leuA</name>
    <name type="ordered locus">PSPA7_1323</name>
</gene>
<protein>
    <recommendedName>
        <fullName evidence="1">2-isopropylmalate synthase</fullName>
        <ecNumber evidence="1">2.3.3.13</ecNumber>
    </recommendedName>
    <alternativeName>
        <fullName evidence="1">Alpha-IPM synthase</fullName>
    </alternativeName>
    <alternativeName>
        <fullName evidence="1">Alpha-isopropylmalate synthase</fullName>
    </alternativeName>
</protein>
<comment type="function">
    <text evidence="1">Catalyzes the condensation of the acetyl group of acetyl-CoA with 3-methyl-2-oxobutanoate (2-ketoisovalerate) to form 3-carboxy-3-hydroxy-4-methylpentanoate (2-isopropylmalate).</text>
</comment>
<comment type="catalytic activity">
    <reaction evidence="1">
        <text>3-methyl-2-oxobutanoate + acetyl-CoA + H2O = (2S)-2-isopropylmalate + CoA + H(+)</text>
        <dbReference type="Rhea" id="RHEA:21524"/>
        <dbReference type="ChEBI" id="CHEBI:1178"/>
        <dbReference type="ChEBI" id="CHEBI:11851"/>
        <dbReference type="ChEBI" id="CHEBI:15377"/>
        <dbReference type="ChEBI" id="CHEBI:15378"/>
        <dbReference type="ChEBI" id="CHEBI:57287"/>
        <dbReference type="ChEBI" id="CHEBI:57288"/>
        <dbReference type="EC" id="2.3.3.13"/>
    </reaction>
</comment>
<comment type="cofactor">
    <cofactor evidence="1">
        <name>Mg(2+)</name>
        <dbReference type="ChEBI" id="CHEBI:18420"/>
    </cofactor>
</comment>
<comment type="pathway">
    <text evidence="1">Amino-acid biosynthesis; L-leucine biosynthesis; L-leucine from 3-methyl-2-oxobutanoate: step 1/4.</text>
</comment>
<comment type="subunit">
    <text evidence="1">Homodimer.</text>
</comment>
<comment type="subcellular location">
    <subcellularLocation>
        <location evidence="1">Cytoplasm</location>
    </subcellularLocation>
</comment>
<comment type="similarity">
    <text evidence="1">Belongs to the alpha-IPM synthase/homocitrate synthase family. LeuA type 2 subfamily.</text>
</comment>
<organism>
    <name type="scientific">Pseudomonas paraeruginosa (strain DSM 24068 / PA7)</name>
    <name type="common">Pseudomonas aeruginosa (strain PA7)</name>
    <dbReference type="NCBI Taxonomy" id="381754"/>
    <lineage>
        <taxon>Bacteria</taxon>
        <taxon>Pseudomonadati</taxon>
        <taxon>Pseudomonadota</taxon>
        <taxon>Gammaproteobacteria</taxon>
        <taxon>Pseudomonadales</taxon>
        <taxon>Pseudomonadaceae</taxon>
        <taxon>Pseudomonas</taxon>
        <taxon>Pseudomonas paraeruginosa</taxon>
    </lineage>
</organism>
<feature type="chain" id="PRO_1000025032" description="2-isopropylmalate synthase">
    <location>
        <begin position="1"/>
        <end position="556"/>
    </location>
</feature>
<feature type="domain" description="Pyruvate carboxyltransferase" evidence="1">
    <location>
        <begin position="33"/>
        <end position="307"/>
    </location>
</feature>
<feature type="region of interest" description="Regulatory domain" evidence="1">
    <location>
        <begin position="439"/>
        <end position="556"/>
    </location>
</feature>
<feature type="binding site" evidence="1">
    <location>
        <position position="42"/>
    </location>
    <ligand>
        <name>Mg(2+)</name>
        <dbReference type="ChEBI" id="CHEBI:18420"/>
    </ligand>
</feature>
<feature type="binding site" evidence="1">
    <location>
        <position position="246"/>
    </location>
    <ligand>
        <name>Mg(2+)</name>
        <dbReference type="ChEBI" id="CHEBI:18420"/>
    </ligand>
</feature>
<feature type="binding site" evidence="1">
    <location>
        <position position="248"/>
    </location>
    <ligand>
        <name>Mg(2+)</name>
        <dbReference type="ChEBI" id="CHEBI:18420"/>
    </ligand>
</feature>
<feature type="binding site" evidence="1">
    <location>
        <position position="282"/>
    </location>
    <ligand>
        <name>Mg(2+)</name>
        <dbReference type="ChEBI" id="CHEBI:18420"/>
    </ligand>
</feature>
<evidence type="ECO:0000255" key="1">
    <source>
        <dbReference type="HAMAP-Rule" id="MF_00572"/>
    </source>
</evidence>
<keyword id="KW-0028">Amino-acid biosynthesis</keyword>
<keyword id="KW-0100">Branched-chain amino acid biosynthesis</keyword>
<keyword id="KW-0963">Cytoplasm</keyword>
<keyword id="KW-0432">Leucine biosynthesis</keyword>
<keyword id="KW-0460">Magnesium</keyword>
<keyword id="KW-0479">Metal-binding</keyword>
<keyword id="KW-0808">Transferase</keyword>